<protein>
    <recommendedName>
        <fullName evidence="1">Ribosomal RNA large subunit methyltransferase M</fullName>
        <ecNumber evidence="1">2.1.1.186</ecNumber>
    </recommendedName>
    <alternativeName>
        <fullName evidence="1">23S rRNA (cytidine2498-2'-O)-methyltransferase</fullName>
    </alternativeName>
    <alternativeName>
        <fullName evidence="1">23S rRNA 2'-O-ribose methyltransferase RlmM</fullName>
    </alternativeName>
</protein>
<dbReference type="EC" id="2.1.1.186" evidence="1"/>
<dbReference type="EMBL" id="CP001614">
    <property type="protein sequence ID" value="ACR13370.1"/>
    <property type="molecule type" value="Genomic_DNA"/>
</dbReference>
<dbReference type="RefSeq" id="WP_015819484.1">
    <property type="nucleotide sequence ID" value="NC_012997.1"/>
</dbReference>
<dbReference type="SMR" id="C5BR43"/>
<dbReference type="STRING" id="377629.TERTU_1121"/>
<dbReference type="KEGG" id="ttu:TERTU_1121"/>
<dbReference type="eggNOG" id="COG2933">
    <property type="taxonomic scope" value="Bacteria"/>
</dbReference>
<dbReference type="HOGENOM" id="CLU_043780_0_0_6"/>
<dbReference type="OrthoDB" id="154490at2"/>
<dbReference type="Proteomes" id="UP000009080">
    <property type="component" value="Chromosome"/>
</dbReference>
<dbReference type="GO" id="GO:0005737">
    <property type="term" value="C:cytoplasm"/>
    <property type="evidence" value="ECO:0007669"/>
    <property type="project" value="UniProtKB-SubCell"/>
</dbReference>
<dbReference type="GO" id="GO:0008757">
    <property type="term" value="F:S-adenosylmethionine-dependent methyltransferase activity"/>
    <property type="evidence" value="ECO:0007669"/>
    <property type="project" value="UniProtKB-UniRule"/>
</dbReference>
<dbReference type="GO" id="GO:0032259">
    <property type="term" value="P:methylation"/>
    <property type="evidence" value="ECO:0007669"/>
    <property type="project" value="UniProtKB-KW"/>
</dbReference>
<dbReference type="GO" id="GO:0006364">
    <property type="term" value="P:rRNA processing"/>
    <property type="evidence" value="ECO:0007669"/>
    <property type="project" value="UniProtKB-UniRule"/>
</dbReference>
<dbReference type="Gene3D" id="3.30.2300.20">
    <property type="match status" value="1"/>
</dbReference>
<dbReference type="Gene3D" id="3.30.70.2810">
    <property type="match status" value="1"/>
</dbReference>
<dbReference type="Gene3D" id="3.40.50.150">
    <property type="entry name" value="Vaccinia Virus protein VP39"/>
    <property type="match status" value="1"/>
</dbReference>
<dbReference type="HAMAP" id="MF_01551">
    <property type="entry name" value="23SrRNA_methyltr_M"/>
    <property type="match status" value="1"/>
</dbReference>
<dbReference type="InterPro" id="IPR040739">
    <property type="entry name" value="RlmM_FDX"/>
</dbReference>
<dbReference type="InterPro" id="IPR002877">
    <property type="entry name" value="RNA_MeTrfase_FtsJ_dom"/>
</dbReference>
<dbReference type="InterPro" id="IPR011224">
    <property type="entry name" value="rRNA_MeTrfase_M"/>
</dbReference>
<dbReference type="InterPro" id="IPR029063">
    <property type="entry name" value="SAM-dependent_MTases_sf"/>
</dbReference>
<dbReference type="NCBIfam" id="NF008734">
    <property type="entry name" value="PRK11760.1"/>
    <property type="match status" value="1"/>
</dbReference>
<dbReference type="PANTHER" id="PTHR37524">
    <property type="entry name" value="RIBOSOMAL RNA LARGE SUBUNIT METHYLTRANSFERASE M"/>
    <property type="match status" value="1"/>
</dbReference>
<dbReference type="PANTHER" id="PTHR37524:SF2">
    <property type="entry name" value="RIBOSOMAL RNA METHYLTRANSFERASE FTSJ DOMAIN-CONTAINING PROTEIN"/>
    <property type="match status" value="1"/>
</dbReference>
<dbReference type="Pfam" id="PF01728">
    <property type="entry name" value="FtsJ"/>
    <property type="match status" value="1"/>
</dbReference>
<dbReference type="Pfam" id="PF18125">
    <property type="entry name" value="RlmM_FDX"/>
    <property type="match status" value="1"/>
</dbReference>
<dbReference type="PIRSF" id="PIRSF028774">
    <property type="entry name" value="UCP028774"/>
    <property type="match status" value="1"/>
</dbReference>
<dbReference type="SUPFAM" id="SSF53335">
    <property type="entry name" value="S-adenosyl-L-methionine-dependent methyltransferases"/>
    <property type="match status" value="1"/>
</dbReference>
<name>RLMM_TERTT</name>
<comment type="function">
    <text evidence="1">Catalyzes the 2'-O-methylation at nucleotide C2498 in 23S rRNA.</text>
</comment>
<comment type="catalytic activity">
    <reaction evidence="1">
        <text>cytidine(2498) in 23S rRNA + S-adenosyl-L-methionine = 2'-O-methylcytidine(2498) in 23S rRNA + S-adenosyl-L-homocysteine + H(+)</text>
        <dbReference type="Rhea" id="RHEA:42788"/>
        <dbReference type="Rhea" id="RHEA-COMP:10244"/>
        <dbReference type="Rhea" id="RHEA-COMP:10245"/>
        <dbReference type="ChEBI" id="CHEBI:15378"/>
        <dbReference type="ChEBI" id="CHEBI:57856"/>
        <dbReference type="ChEBI" id="CHEBI:59789"/>
        <dbReference type="ChEBI" id="CHEBI:74495"/>
        <dbReference type="ChEBI" id="CHEBI:82748"/>
        <dbReference type="EC" id="2.1.1.186"/>
    </reaction>
</comment>
<comment type="subunit">
    <text evidence="1">Monomer.</text>
</comment>
<comment type="subcellular location">
    <subcellularLocation>
        <location evidence="1">Cytoplasm</location>
    </subcellularLocation>
</comment>
<comment type="similarity">
    <text evidence="1">Belongs to the class I-like SAM-binding methyltransferase superfamily. RNA methyltransferase RlmE family. RlmM subfamily.</text>
</comment>
<gene>
    <name evidence="1" type="primary">rlmM</name>
    <name type="ordered locus">TERTU_1121</name>
</gene>
<proteinExistence type="inferred from homology"/>
<reference key="1">
    <citation type="journal article" date="2009" name="PLoS ONE">
        <title>The complete genome of Teredinibacter turnerae T7901: an intracellular endosymbiont of marine wood-boring bivalves (shipworms).</title>
        <authorList>
            <person name="Yang J.C."/>
            <person name="Madupu R."/>
            <person name="Durkin A.S."/>
            <person name="Ekborg N.A."/>
            <person name="Pedamallu C.S."/>
            <person name="Hostetler J.B."/>
            <person name="Radune D."/>
            <person name="Toms B.S."/>
            <person name="Henrissat B."/>
            <person name="Coutinho P.M."/>
            <person name="Schwarz S."/>
            <person name="Field L."/>
            <person name="Trindade-Silva A.E."/>
            <person name="Soares C.A.G."/>
            <person name="Elshahawi S."/>
            <person name="Hanora A."/>
            <person name="Schmidt E.W."/>
            <person name="Haygood M.G."/>
            <person name="Posfai J."/>
            <person name="Benner J."/>
            <person name="Madinger C."/>
            <person name="Nove J."/>
            <person name="Anton B."/>
            <person name="Chaudhary K."/>
            <person name="Foster J."/>
            <person name="Holman A."/>
            <person name="Kumar S."/>
            <person name="Lessard P.A."/>
            <person name="Luyten Y.A."/>
            <person name="Slatko B."/>
            <person name="Wood N."/>
            <person name="Wu B."/>
            <person name="Teplitski M."/>
            <person name="Mougous J.D."/>
            <person name="Ward N."/>
            <person name="Eisen J.A."/>
            <person name="Badger J.H."/>
            <person name="Distel D.L."/>
        </authorList>
    </citation>
    <scope>NUCLEOTIDE SEQUENCE [LARGE SCALE GENOMIC DNA]</scope>
    <source>
        <strain>ATCC 39867 / T7901</strain>
    </source>
</reference>
<sequence>MELVALCRTGFEKELAAELVDVTATHGVHGYPKARDGQGYVQFVVDDGAELLRCINAVVFDELVFVRDWFVSAGAISGLPADDRVSPLQNQFKAAFSGHIQEVADLLFLNVDSNEGKALSKLTRGVGSHLKRQLPLAKGSDWLGVLLLLSGSEGFIGVCPRRQRPRWAGGVARLKFPREAPSRATLKLEEAWHHFIPASEWDTRLAPSMKAVDLGAAPGGWTWQLVARSMFVDAVDNGPMAPTLMEGGQVTHRQVDGFAYHPPKPVDWLVCDIADKPARVADMIASWAENSWFREAVFNLKLPMKQRYKEVLRCREQIELRLLAAGRDYRLRFKQLYHDREEVTGHLELR</sequence>
<accession>C5BR43</accession>
<organism>
    <name type="scientific">Teredinibacter turnerae (strain ATCC 39867 / T7901)</name>
    <dbReference type="NCBI Taxonomy" id="377629"/>
    <lineage>
        <taxon>Bacteria</taxon>
        <taxon>Pseudomonadati</taxon>
        <taxon>Pseudomonadota</taxon>
        <taxon>Gammaproteobacteria</taxon>
        <taxon>Cellvibrionales</taxon>
        <taxon>Cellvibrionaceae</taxon>
        <taxon>Teredinibacter</taxon>
    </lineage>
</organism>
<keyword id="KW-0963">Cytoplasm</keyword>
<keyword id="KW-0489">Methyltransferase</keyword>
<keyword id="KW-1185">Reference proteome</keyword>
<keyword id="KW-0698">rRNA processing</keyword>
<keyword id="KW-0949">S-adenosyl-L-methionine</keyword>
<keyword id="KW-0808">Transferase</keyword>
<evidence type="ECO:0000255" key="1">
    <source>
        <dbReference type="HAMAP-Rule" id="MF_01551"/>
    </source>
</evidence>
<feature type="chain" id="PRO_0000388989" description="Ribosomal RNA large subunit methyltransferase M">
    <location>
        <begin position="1"/>
        <end position="350"/>
    </location>
</feature>
<feature type="active site" description="Proton acceptor" evidence="1">
    <location>
        <position position="301"/>
    </location>
</feature>
<feature type="binding site" evidence="1">
    <location>
        <begin position="217"/>
        <end position="220"/>
    </location>
    <ligand>
        <name>S-adenosyl-L-methionine</name>
        <dbReference type="ChEBI" id="CHEBI:59789"/>
    </ligand>
</feature>
<feature type="binding site" evidence="1">
    <location>
        <position position="236"/>
    </location>
    <ligand>
        <name>S-adenosyl-L-methionine</name>
        <dbReference type="ChEBI" id="CHEBI:59789"/>
    </ligand>
</feature>
<feature type="binding site" evidence="1">
    <location>
        <position position="256"/>
    </location>
    <ligand>
        <name>S-adenosyl-L-methionine</name>
        <dbReference type="ChEBI" id="CHEBI:59789"/>
    </ligand>
</feature>
<feature type="binding site" evidence="1">
    <location>
        <position position="272"/>
    </location>
    <ligand>
        <name>S-adenosyl-L-methionine</name>
        <dbReference type="ChEBI" id="CHEBI:59789"/>
    </ligand>
</feature>